<name>KEAP1_RAT</name>
<keyword id="KW-0963">Cytoplasm</keyword>
<keyword id="KW-0880">Kelch repeat</keyword>
<keyword id="KW-0539">Nucleus</keyword>
<keyword id="KW-1185">Reference proteome</keyword>
<keyword id="KW-0677">Repeat</keyword>
<keyword id="KW-0702">S-nitrosylation</keyword>
<keyword id="KW-0883">Thioether bond</keyword>
<keyword id="KW-0832">Ubl conjugation</keyword>
<keyword id="KW-0833">Ubl conjugation pathway</keyword>
<evidence type="ECO:0000250" key="1">
    <source>
        <dbReference type="UniProtKB" id="Q14145"/>
    </source>
</evidence>
<evidence type="ECO:0000250" key="2">
    <source>
        <dbReference type="UniProtKB" id="Q9Z2X8"/>
    </source>
</evidence>
<evidence type="ECO:0000255" key="3">
    <source>
        <dbReference type="PROSITE-ProRule" id="PRU00037"/>
    </source>
</evidence>
<evidence type="ECO:0000303" key="4">
    <source>
    </source>
</evidence>
<evidence type="ECO:0000305" key="5"/>
<evidence type="ECO:0000312" key="6">
    <source>
        <dbReference type="RGD" id="621619"/>
    </source>
</evidence>
<dbReference type="EMBL" id="AF304364">
    <property type="protein sequence ID" value="AAG16275.1"/>
    <property type="molecule type" value="mRNA"/>
</dbReference>
<dbReference type="SMR" id="P57790"/>
<dbReference type="FunCoup" id="P57790">
    <property type="interactions" value="1079"/>
</dbReference>
<dbReference type="STRING" id="10116.ENSRNOP00000028360"/>
<dbReference type="ChEMBL" id="CHEMBL4523596"/>
<dbReference type="iPTMnet" id="P57790"/>
<dbReference type="PhosphoSitePlus" id="P57790"/>
<dbReference type="PaxDb" id="10116-ENSRNOP00000028360"/>
<dbReference type="UCSC" id="RGD:621619">
    <property type="organism name" value="rat"/>
</dbReference>
<dbReference type="AGR" id="RGD:621619"/>
<dbReference type="RGD" id="621619">
    <property type="gene designation" value="Keap1"/>
</dbReference>
<dbReference type="eggNOG" id="KOG4441">
    <property type="taxonomic scope" value="Eukaryota"/>
</dbReference>
<dbReference type="InParanoid" id="P57790"/>
<dbReference type="PhylomeDB" id="P57790"/>
<dbReference type="Reactome" id="R-RNO-5689880">
    <property type="pathway name" value="Ub-specific processing proteases"/>
</dbReference>
<dbReference type="Reactome" id="R-RNO-8951664">
    <property type="pathway name" value="Neddylation"/>
</dbReference>
<dbReference type="Reactome" id="R-RNO-9755511">
    <property type="pathway name" value="KEAP1-NFE2L2 pathway"/>
</dbReference>
<dbReference type="Reactome" id="R-RNO-983168">
    <property type="pathway name" value="Antigen processing: Ubiquitination &amp; Proteasome degradation"/>
</dbReference>
<dbReference type="UniPathway" id="UPA00143"/>
<dbReference type="PRO" id="PR:P57790"/>
<dbReference type="Proteomes" id="UP000002494">
    <property type="component" value="Unplaced"/>
</dbReference>
<dbReference type="GO" id="GO:0005884">
    <property type="term" value="C:actin filament"/>
    <property type="evidence" value="ECO:0000266"/>
    <property type="project" value="RGD"/>
</dbReference>
<dbReference type="GO" id="GO:0005912">
    <property type="term" value="C:adherens junction"/>
    <property type="evidence" value="ECO:0000314"/>
    <property type="project" value="RGD"/>
</dbReference>
<dbReference type="GO" id="GO:0031463">
    <property type="term" value="C:Cul3-RING ubiquitin ligase complex"/>
    <property type="evidence" value="ECO:0000250"/>
    <property type="project" value="UniProtKB"/>
</dbReference>
<dbReference type="GO" id="GO:0005737">
    <property type="term" value="C:cytoplasm"/>
    <property type="evidence" value="ECO:0000266"/>
    <property type="project" value="RGD"/>
</dbReference>
<dbReference type="GO" id="GO:0005783">
    <property type="term" value="C:endoplasmic reticulum"/>
    <property type="evidence" value="ECO:0000266"/>
    <property type="project" value="RGD"/>
</dbReference>
<dbReference type="GO" id="GO:0005925">
    <property type="term" value="C:focal adhesion"/>
    <property type="evidence" value="ECO:0000314"/>
    <property type="project" value="RGD"/>
</dbReference>
<dbReference type="GO" id="GO:0016234">
    <property type="term" value="C:inclusion body"/>
    <property type="evidence" value="ECO:0000250"/>
    <property type="project" value="UniProtKB"/>
</dbReference>
<dbReference type="GO" id="GO:0030496">
    <property type="term" value="C:midbody"/>
    <property type="evidence" value="ECO:0000266"/>
    <property type="project" value="RGD"/>
</dbReference>
<dbReference type="GO" id="GO:0005634">
    <property type="term" value="C:nucleus"/>
    <property type="evidence" value="ECO:0007669"/>
    <property type="project" value="UniProtKB-SubCell"/>
</dbReference>
<dbReference type="GO" id="GO:0032991">
    <property type="term" value="C:protein-containing complex"/>
    <property type="evidence" value="ECO:0000314"/>
    <property type="project" value="RGD"/>
</dbReference>
<dbReference type="GO" id="GO:0097718">
    <property type="term" value="F:disordered domain specific binding"/>
    <property type="evidence" value="ECO:0000266"/>
    <property type="project" value="RGD"/>
</dbReference>
<dbReference type="GO" id="GO:0042802">
    <property type="term" value="F:identical protein binding"/>
    <property type="evidence" value="ECO:0000266"/>
    <property type="project" value="RGD"/>
</dbReference>
<dbReference type="GO" id="GO:0061629">
    <property type="term" value="F:RNA polymerase II-specific DNA-binding transcription factor binding"/>
    <property type="evidence" value="ECO:0000266"/>
    <property type="project" value="RGD"/>
</dbReference>
<dbReference type="GO" id="GO:0140416">
    <property type="term" value="F:transcription regulator inhibitor activity"/>
    <property type="evidence" value="ECO:0000266"/>
    <property type="project" value="RGD"/>
</dbReference>
<dbReference type="GO" id="GO:1990756">
    <property type="term" value="F:ubiquitin-like ligase-substrate adaptor activity"/>
    <property type="evidence" value="ECO:0000266"/>
    <property type="project" value="RGD"/>
</dbReference>
<dbReference type="GO" id="GO:0071322">
    <property type="term" value="P:cellular response to carbohydrate stimulus"/>
    <property type="evidence" value="ECO:0000314"/>
    <property type="project" value="RGD"/>
</dbReference>
<dbReference type="GO" id="GO:0071353">
    <property type="term" value="P:cellular response to interleukin-4"/>
    <property type="evidence" value="ECO:0000266"/>
    <property type="project" value="RGD"/>
</dbReference>
<dbReference type="GO" id="GO:0034599">
    <property type="term" value="P:cellular response to oxidative stress"/>
    <property type="evidence" value="ECO:0000250"/>
    <property type="project" value="UniProtKB"/>
</dbReference>
<dbReference type="GO" id="GO:0001701">
    <property type="term" value="P:in utero embryonic development"/>
    <property type="evidence" value="ECO:0000266"/>
    <property type="project" value="RGD"/>
</dbReference>
<dbReference type="GO" id="GO:0010629">
    <property type="term" value="P:negative regulation of gene expression"/>
    <property type="evidence" value="ECO:0000314"/>
    <property type="project" value="RGD"/>
</dbReference>
<dbReference type="GO" id="GO:1902883">
    <property type="term" value="P:negative regulation of response to oxidative stress"/>
    <property type="evidence" value="ECO:0000266"/>
    <property type="project" value="RGD"/>
</dbReference>
<dbReference type="GO" id="GO:0000122">
    <property type="term" value="P:negative regulation of transcription by RNA polymerase II"/>
    <property type="evidence" value="ECO:0000266"/>
    <property type="project" value="RGD"/>
</dbReference>
<dbReference type="GO" id="GO:0043161">
    <property type="term" value="P:proteasome-mediated ubiquitin-dependent protein catabolic process"/>
    <property type="evidence" value="ECO:0000266"/>
    <property type="project" value="RGD"/>
</dbReference>
<dbReference type="GO" id="GO:0016567">
    <property type="term" value="P:protein ubiquitination"/>
    <property type="evidence" value="ECO:0000250"/>
    <property type="project" value="UniProtKB"/>
</dbReference>
<dbReference type="GO" id="GO:0010506">
    <property type="term" value="P:regulation of autophagy"/>
    <property type="evidence" value="ECO:0000250"/>
    <property type="project" value="UniProtKB"/>
</dbReference>
<dbReference type="GO" id="GO:0006355">
    <property type="term" value="P:regulation of DNA-templated transcription"/>
    <property type="evidence" value="ECO:0000266"/>
    <property type="project" value="RGD"/>
</dbReference>
<dbReference type="GO" id="GO:0045604">
    <property type="term" value="P:regulation of epidermal cell differentiation"/>
    <property type="evidence" value="ECO:0000266"/>
    <property type="project" value="RGD"/>
</dbReference>
<dbReference type="GO" id="GO:0035902">
    <property type="term" value="P:response to immobilization stress"/>
    <property type="evidence" value="ECO:0000270"/>
    <property type="project" value="RGD"/>
</dbReference>
<dbReference type="GO" id="GO:0010038">
    <property type="term" value="P:response to metal ion"/>
    <property type="evidence" value="ECO:0000270"/>
    <property type="project" value="RGD"/>
</dbReference>
<dbReference type="GO" id="GO:0097066">
    <property type="term" value="P:response to thyroid hormone"/>
    <property type="evidence" value="ECO:0000270"/>
    <property type="project" value="RGD"/>
</dbReference>
<dbReference type="GO" id="GO:0001887">
    <property type="term" value="P:selenium compound metabolic process"/>
    <property type="evidence" value="ECO:0000270"/>
    <property type="project" value="RGD"/>
</dbReference>
<dbReference type="GO" id="GO:0006511">
    <property type="term" value="P:ubiquitin-dependent protein catabolic process"/>
    <property type="evidence" value="ECO:0000250"/>
    <property type="project" value="UniProtKB"/>
</dbReference>
<dbReference type="CDD" id="cd18458">
    <property type="entry name" value="BACK_KLHL19_KEAP1"/>
    <property type="match status" value="1"/>
</dbReference>
<dbReference type="CDD" id="cd18248">
    <property type="entry name" value="BTB_POZ_KLHL19_KEAP1"/>
    <property type="match status" value="1"/>
</dbReference>
<dbReference type="FunFam" id="2.120.10.80:FF:000024">
    <property type="entry name" value="Kelch-like ECH-associated protein 1"/>
    <property type="match status" value="1"/>
</dbReference>
<dbReference type="FunFam" id="1.25.40.420:FF:000001">
    <property type="entry name" value="Kelch-like family member 12"/>
    <property type="match status" value="1"/>
</dbReference>
<dbReference type="FunFam" id="3.30.710.10:FF:000001">
    <property type="entry name" value="Kelch-like family member 20"/>
    <property type="match status" value="1"/>
</dbReference>
<dbReference type="Gene3D" id="1.25.40.420">
    <property type="match status" value="1"/>
</dbReference>
<dbReference type="Gene3D" id="2.120.10.80">
    <property type="entry name" value="Kelch-type beta propeller"/>
    <property type="match status" value="1"/>
</dbReference>
<dbReference type="Gene3D" id="3.30.710.10">
    <property type="entry name" value="Potassium Channel Kv1.1, Chain A"/>
    <property type="match status" value="1"/>
</dbReference>
<dbReference type="InterPro" id="IPR011705">
    <property type="entry name" value="BACK"/>
</dbReference>
<dbReference type="InterPro" id="IPR017096">
    <property type="entry name" value="BTB-kelch_protein"/>
</dbReference>
<dbReference type="InterPro" id="IPR000210">
    <property type="entry name" value="BTB/POZ_dom"/>
</dbReference>
<dbReference type="InterPro" id="IPR047098">
    <property type="entry name" value="KEAP1_BACK"/>
</dbReference>
<dbReference type="InterPro" id="IPR030563">
    <property type="entry name" value="KEAP1_BTB_POZ_dom"/>
</dbReference>
<dbReference type="InterPro" id="IPR015915">
    <property type="entry name" value="Kelch-typ_b-propeller"/>
</dbReference>
<dbReference type="InterPro" id="IPR006652">
    <property type="entry name" value="Kelch_1"/>
</dbReference>
<dbReference type="InterPro" id="IPR011333">
    <property type="entry name" value="SKP1/BTB/POZ_sf"/>
</dbReference>
<dbReference type="PANTHER" id="PTHR45632:SF13">
    <property type="entry name" value="KELCH-LIKE PROTEIN 26"/>
    <property type="match status" value="1"/>
</dbReference>
<dbReference type="PANTHER" id="PTHR45632">
    <property type="entry name" value="LD33804P"/>
    <property type="match status" value="1"/>
</dbReference>
<dbReference type="Pfam" id="PF07707">
    <property type="entry name" value="BACK"/>
    <property type="match status" value="1"/>
</dbReference>
<dbReference type="Pfam" id="PF00651">
    <property type="entry name" value="BTB"/>
    <property type="match status" value="1"/>
</dbReference>
<dbReference type="Pfam" id="PF01344">
    <property type="entry name" value="Kelch_1"/>
    <property type="match status" value="3"/>
</dbReference>
<dbReference type="Pfam" id="PF24681">
    <property type="entry name" value="Kelch_KLHDC2_KLHL20_DRC7"/>
    <property type="match status" value="1"/>
</dbReference>
<dbReference type="PIRSF" id="PIRSF037037">
    <property type="entry name" value="Kelch-like_protein_gigaxonin"/>
    <property type="match status" value="1"/>
</dbReference>
<dbReference type="SMART" id="SM00875">
    <property type="entry name" value="BACK"/>
    <property type="match status" value="1"/>
</dbReference>
<dbReference type="SMART" id="SM00225">
    <property type="entry name" value="BTB"/>
    <property type="match status" value="1"/>
</dbReference>
<dbReference type="SMART" id="SM00612">
    <property type="entry name" value="Kelch"/>
    <property type="match status" value="6"/>
</dbReference>
<dbReference type="SUPFAM" id="SSF117281">
    <property type="entry name" value="Kelch motif"/>
    <property type="match status" value="1"/>
</dbReference>
<dbReference type="SUPFAM" id="SSF54695">
    <property type="entry name" value="POZ domain"/>
    <property type="match status" value="1"/>
</dbReference>
<dbReference type="PROSITE" id="PS50097">
    <property type="entry name" value="BTB"/>
    <property type="match status" value="1"/>
</dbReference>
<protein>
    <recommendedName>
        <fullName>Kelch-like ECH-associated protein 1</fullName>
    </recommendedName>
    <alternativeName>
        <fullName evidence="4">Cytosolic inhibitor of Nrf2</fullName>
        <shortName evidence="4">INrf2</shortName>
    </alternativeName>
</protein>
<proteinExistence type="evidence at transcript level"/>
<sequence>MQPEPKPSGAPRSSQFLPLWSKCPEGAGDAVMYASTECKAEVTPSQDGNRTFSYTLEDHTKQAFGIMNELRLSQQLCDVTLQVKYEDIPAAQFMAHKVVLASSSPVFKAMFTNGLREQGMEVVSIEGIHPKVMERLIEFAYTASISVGEKCVLHVMNGAVMYQIDSVVRACSDFLVQQLDPSNAIGIANFAEQIGCTELHQRAREYIYMHFGEVAKQEEFFNLSHCQLATLISRDDLNVRCESEVFHACIDWVKYDCPQRRFYVQALLRAVRCHALTPRFLQTQLQKCEILQADARCKDYLVQIFQELTLHKPTQAVPCRAPKVGRLIYTAGGYFRQSLSYLEAYNPSNGSWLRLADLQVPRSGLAGCVVGGLLYAVGGRNNSPDGNTDSSALDCYNPMTNQWSPCASLSVPRNRSGGGVIDGHIYAVGGSHGCIHHSSVERYEPDRDEWHLVAPMLTRRIGVGVAVLNRLLYAVGGFDGTNRLNSAECYYPERNEWRMITPMNTIRSGAGVCVLHSCIYAAGGYDGQDQLNSVERYDVETETWTFVASMKHRRSALGIAVHQGRIYVLGGYDGHTFLDSVECYDPDTDTWSEVTRLTSGRSGVGVAVTMEPCRKQIDQQNCTC</sequence>
<comment type="function">
    <text evidence="1 2">Substrate-specific adapter of a BCR (BTB-CUL3-RBX1) E3 ubiquitin ligase complex that regulates the response to oxidative stress by targeting NFE2L2/NRF2 for ubiquitination. KEAP1 acts as a key sensor of oxidative and electrophilic stress: in normal conditions, the BCR(KEAP1) complex mediates ubiquitination and degradation of NFE2L2/NRF2, a transcription factor regulating expression of many cytoprotective genes. In response to oxidative stress, different electrophile metabolites trigger non-enzymatic covalent modifications of highly reactive cysteine residues in KEAP1, leading to inactivate the ubiquitin ligase activity of the BCR(KEAP1) complex, promoting NFE2L2/NRF2 nuclear accumulation and expression of phase II detoxifying enzymes. In response to selective autophagy, KEAP1 is sequestered in inclusion bodies following its interaction with SQSTM1/p62, leading to inactivation of the BCR(KEAP1) complex and activation of NFE2L2/NRF2. The BCR(KEAP1) complex also mediates ubiquitination of SQSTM1/p62, increasing SQSTM1/p62 sequestering activity and degradation (By similarity). The BCR(KEAP1) complex also targets BPTF and PGAM5 for ubiquitination and degradation by the proteasome (By similarity).</text>
</comment>
<comment type="activity regulation">
    <text evidence="2">Ubiquitin ligase activity of the BCR(KEAP1) complex is inhibited by oxidative stress and electrophile metabolites such as sulforaphane. Electrophile metabolites react with reactive cysteine residues in KEAP1 and trigger non-enzymatic covalent modifications of these cysteine residues, leading to inactivate the ubiquitin ligase activity of the BCR(KEAP1) complex. Selective autophagy also inactivates the BCR(KEAP1) complex via interaction between KEAP1 and SQSTM1/p62, which sequesters the complex in inclusion bodies and promotes its degradation.</text>
</comment>
<comment type="pathway">
    <text evidence="2">Protein modification; protein ubiquitination.</text>
</comment>
<comment type="subunit">
    <text evidence="1 2">Component of the BCR(KEAP1) E3 ubiquitin ligase complex, at least composed of 2 molecules of CUL3, 2 molecules of KEAP1, and RBX1. Interacts with NFE2L2/NRF2; the interaction is direct (By similarity). Forms a ternary complex with NFE2L2/NRF2 and PGAM5 (By similarity). Interacts with (phosphorylated) SQSTM1/p62; the interaction is direct and inactivates the BCR(KEAP1) complex by sequestering it in inclusion bodies, promoting its degradation (By similarity). Interacts with NFE2L1. Interacts with BPTF and PTMA. Interacts with MAP1LC3B. Interacts indirectly with ENC1. Interacts with SESN1 and SESN2. Interacts with HSP90AA1 and HSP90AB1 (By similarity). Interacts with PGCKA1; this interaction prevents the ubiquitination of KEAP1 by TRIM25, thus protecting KEAP1 from degradation (By similarity).</text>
</comment>
<comment type="subcellular location">
    <subcellularLocation>
        <location evidence="2">Cytoplasm</location>
    </subcellularLocation>
    <subcellularLocation>
        <location evidence="2">Nucleus</location>
    </subcellularLocation>
    <text evidence="2">Mainly cytoplasmic. In response to selective autophagy, relocalizes to inclusion bodies following interaction with SQSTM1/p62.</text>
</comment>
<comment type="domain">
    <text evidence="1">The Kelch repeats mediate interaction with NFE2L2/NRF2, BPTF and PGAM5.</text>
</comment>
<comment type="domain">
    <text evidence="2">KEAP1 contains reactive cysteine residues that act as sensors for endogenously produced and exogenously encountered small molecules, which react with sulfhydryl groups and modify the cysteine sensors, leading to impair ability of the BCR(KEAP1) complex to ubiquitinate target proteins.</text>
</comment>
<comment type="PTM">
    <text evidence="1 2">Non-enzymatic covalent modifications of reactive cysteines by electrophile metabolites inactivate the BCR(KEAP1) complex. Accumulation of fumarate promotes the formation of cysteine S-succination (S-(2-succinyl)cysteine), leading to inactivate the BCR(KEAP1) complex and promote NFE2L2/NRF2 nuclear accumulation and activation. Nitric oxide-dependent 8-Nitro-cGMP formation promotes cysteine guanylation (S-cGMP-cysteine), leading to NFE2L2/NRF2 nuclear accumulation and activation. Itaconate, an anti-inflammatory metabolite generated in response to lipopolysaccharide, alkylates cysteines, activating NFE2L2/NRF2 (By similarity). Methylglyoxal, a reactive metabolite that accumulates when the glycolytic enzyme PGK1 is inhibited, promotes formation of a methylimidazole cross-link between proximal Cys-151 and Arg-135 on another KEAP1 molecule, resulting in an inactive dimer that inactivates the BCR(KEAP1) complex (By similarity).</text>
</comment>
<comment type="PTM">
    <text evidence="2">Degraded via a proteasomal-independent process during selective autophagy: interaction with phosphorylated SQSTM1/p62 sequesters KEAP1 in inclusion bodies, leading to its degradation.</text>
</comment>
<comment type="PTM">
    <text evidence="1">Auto-ubiquitinated by the BCR(KEAP1) complex. Quinone-induced oxidative stress, but not sulforaphane, increases its ubiquitination. Ubiquitination and subsequent degradation is most pronounced following prolonged exposure of cells to oxidative stress, particularly in glutathione-deficient cells that are highly susceptible to oxidative stress. Deubiquitinated by USP25; leading to stabilization. Ubiquitinated by TRIM25; leading to degradation upon ER stress (By similarity).</text>
</comment>
<comment type="similarity">
    <text evidence="5">Belongs to the KEAP1 family.</text>
</comment>
<reference key="1">
    <citation type="journal article" date="2001" name="Oncogene">
        <title>Functional characterization and role of INrf2 in antioxidant response element-mediated expression and antioxidant induction of NAD(P)H:quinone oxidoreductase1 gene.</title>
        <authorList>
            <person name="Dhakshinamoorthy S."/>
            <person name="Jaiswal A.K."/>
        </authorList>
    </citation>
    <scope>NUCLEOTIDE SEQUENCE [MRNA]</scope>
    <source>
        <strain>Sprague-Dawley</strain>
    </source>
</reference>
<organism>
    <name type="scientific">Rattus norvegicus</name>
    <name type="common">Rat</name>
    <dbReference type="NCBI Taxonomy" id="10116"/>
    <lineage>
        <taxon>Eukaryota</taxon>
        <taxon>Metazoa</taxon>
        <taxon>Chordata</taxon>
        <taxon>Craniata</taxon>
        <taxon>Vertebrata</taxon>
        <taxon>Euteleostomi</taxon>
        <taxon>Mammalia</taxon>
        <taxon>Eutheria</taxon>
        <taxon>Euarchontoglires</taxon>
        <taxon>Glires</taxon>
        <taxon>Rodentia</taxon>
        <taxon>Myomorpha</taxon>
        <taxon>Muroidea</taxon>
        <taxon>Muridae</taxon>
        <taxon>Murinae</taxon>
        <taxon>Rattus</taxon>
    </lineage>
</organism>
<feature type="chain" id="PRO_0000119095" description="Kelch-like ECH-associated protein 1">
    <location>
        <begin position="1"/>
        <end position="624"/>
    </location>
</feature>
<feature type="domain" description="BTB" evidence="3">
    <location>
        <begin position="77"/>
        <end position="149"/>
    </location>
</feature>
<feature type="domain" description="BACK">
    <location>
        <begin position="184"/>
        <end position="286"/>
    </location>
</feature>
<feature type="repeat" description="Kelch 1">
    <location>
        <begin position="327"/>
        <end position="372"/>
    </location>
</feature>
<feature type="repeat" description="Kelch 2">
    <location>
        <begin position="373"/>
        <end position="423"/>
    </location>
</feature>
<feature type="repeat" description="Kelch 3">
    <location>
        <begin position="424"/>
        <end position="470"/>
    </location>
</feature>
<feature type="repeat" description="Kelch 4">
    <location>
        <begin position="471"/>
        <end position="517"/>
    </location>
</feature>
<feature type="repeat" description="Kelch 5">
    <location>
        <begin position="519"/>
        <end position="564"/>
    </location>
</feature>
<feature type="repeat" description="Kelch 6">
    <location>
        <begin position="565"/>
        <end position="611"/>
    </location>
</feature>
<feature type="site" description="Sensor for electrophilic agents" evidence="2">
    <location>
        <position position="151"/>
    </location>
</feature>
<feature type="site" description="Sensor for electrophilic agents" evidence="1">
    <location>
        <position position="257"/>
    </location>
</feature>
<feature type="site" description="Sensor for electrophilic agents" evidence="1">
    <location>
        <position position="273"/>
    </location>
</feature>
<feature type="site" description="Sensor for electrophilic agents" evidence="2">
    <location>
        <position position="288"/>
    </location>
</feature>
<feature type="site" description="Sensor for electrophilic agents" evidence="2">
    <location>
        <position position="434"/>
    </location>
</feature>
<feature type="modified residue" description="S-(2-succinyl)cysteine" evidence="2">
    <location>
        <position position="38"/>
    </location>
</feature>
<feature type="modified residue" description="S-(2,3-dicarboxypropyl)cysteine; alternate" evidence="1">
    <location>
        <position position="151"/>
    </location>
</feature>
<feature type="modified residue" description="S-(2-succinyl)cysteine" evidence="2">
    <location>
        <position position="151"/>
    </location>
</feature>
<feature type="modified residue" description="S-nitrosocysteine; alternate" evidence="2">
    <location>
        <position position="151"/>
    </location>
</feature>
<feature type="modified residue" description="S-(2-succinyl)cysteine" evidence="2">
    <location>
        <position position="241"/>
    </location>
</feature>
<feature type="modified residue" description="S-(2,3-dicarboxypropyl)cysteine" evidence="1">
    <location>
        <position position="257"/>
    </location>
</feature>
<feature type="modified residue" description="S-(2,3-dicarboxypropyl)cysteine" evidence="1">
    <location>
        <position position="273"/>
    </location>
</feature>
<feature type="modified residue" description="S-(2,3-dicarboxypropyl)cysteine; alternate" evidence="1">
    <location>
        <position position="288"/>
    </location>
</feature>
<feature type="modified residue" description="S-(2-succinyl)cysteine" evidence="2">
    <location>
        <position position="288"/>
    </location>
</feature>
<feature type="modified residue" description="S-(2-succinyl)cysteine" evidence="2">
    <location>
        <position position="319"/>
    </location>
</feature>
<feature type="modified residue" description="S-cGMP-cysteine" evidence="2">
    <location>
        <position position="434"/>
    </location>
</feature>
<feature type="modified residue" description="S-(2-succinyl)cysteine" evidence="2">
    <location>
        <position position="613"/>
    </location>
</feature>
<feature type="cross-link" description="N5-[4-(S-L-cysteinyl)-5-methyl-1H-imidazol-2-yl]-L-ornithine (Arg-Cys) (interchain with C-151 in KEAP1)" evidence="1">
    <location>
        <position position="135"/>
    </location>
</feature>
<feature type="cross-link" description="N5-[4-(S-L-cysteinyl)-5-methyl-1H-imidazol-2-yl]-L-ornithine (Cys-Arg) (interchain with R-135 in KEAP1)" evidence="1">
    <location>
        <position position="151"/>
    </location>
</feature>
<gene>
    <name evidence="6" type="primary">Keap1</name>
    <name evidence="4" type="synonym">Inrf2</name>
</gene>
<accession>P57790</accession>
<accession>Q9ERI3</accession>